<feature type="signal peptide" evidence="2">
    <location>
        <begin position="1"/>
        <end position="19"/>
    </location>
</feature>
<feature type="chain" id="PRO_5003795924" description="Secretory-abundant heat soluble protein 1" evidence="2">
    <location>
        <begin position="20"/>
        <end position="169"/>
    </location>
</feature>
<feature type="region of interest" description="SAHS-c1" evidence="7">
    <location>
        <begin position="31"/>
        <end position="60"/>
    </location>
</feature>
<feature type="region of interest" description="SAHS-c2" evidence="7">
    <location>
        <begin position="75"/>
        <end position="103"/>
    </location>
</feature>
<feature type="region of interest" description="SAHS-c3" evidence="7">
    <location>
        <begin position="116"/>
        <end position="165"/>
    </location>
</feature>
<feature type="glycosylation site" description="N-linked (GlcNAc...) asparagine" evidence="3">
    <location>
        <position position="109"/>
    </location>
</feature>
<feature type="strand" evidence="8">
    <location>
        <begin position="39"/>
        <end position="49"/>
    </location>
</feature>
<feature type="helix" evidence="8">
    <location>
        <begin position="50"/>
        <end position="56"/>
    </location>
</feature>
<feature type="helix" evidence="8">
    <location>
        <begin position="61"/>
        <end position="64"/>
    </location>
</feature>
<feature type="strand" evidence="8">
    <location>
        <begin position="71"/>
        <end position="77"/>
    </location>
</feature>
<feature type="strand" evidence="8">
    <location>
        <begin position="80"/>
        <end position="87"/>
    </location>
</feature>
<feature type="helix" evidence="8">
    <location>
        <begin position="88"/>
        <end position="90"/>
    </location>
</feature>
<feature type="strand" evidence="8">
    <location>
        <begin position="92"/>
        <end position="98"/>
    </location>
</feature>
<feature type="strand" evidence="8">
    <location>
        <begin position="104"/>
        <end position="108"/>
    </location>
</feature>
<feature type="strand" evidence="8">
    <location>
        <begin position="111"/>
        <end position="120"/>
    </location>
</feature>
<feature type="strand" evidence="8">
    <location>
        <begin position="123"/>
        <end position="130"/>
    </location>
</feature>
<feature type="helix" evidence="8">
    <location>
        <begin position="131"/>
        <end position="133"/>
    </location>
</feature>
<feature type="strand" evidence="8">
    <location>
        <begin position="135"/>
        <end position="143"/>
    </location>
</feature>
<feature type="strand" evidence="8">
    <location>
        <begin position="145"/>
        <end position="154"/>
    </location>
</feature>
<feature type="strand" evidence="8">
    <location>
        <begin position="157"/>
        <end position="165"/>
    </location>
</feature>
<keyword id="KW-0002">3D-structure</keyword>
<keyword id="KW-0325">Glycoprotein</keyword>
<keyword id="KW-1185">Reference proteome</keyword>
<keyword id="KW-0964">Secreted</keyword>
<keyword id="KW-0732">Signal</keyword>
<keyword id="KW-0346">Stress response</keyword>
<organism>
    <name type="scientific">Ramazzottius varieornatus</name>
    <name type="common">Water bear</name>
    <name type="synonym">Tardigrade</name>
    <dbReference type="NCBI Taxonomy" id="947166"/>
    <lineage>
        <taxon>Eukaryota</taxon>
        <taxon>Metazoa</taxon>
        <taxon>Ecdysozoa</taxon>
        <taxon>Tardigrada</taxon>
        <taxon>Eutardigrada</taxon>
        <taxon>Parachela</taxon>
        <taxon>Hypsibioidea</taxon>
        <taxon>Ramazzottiidae</taxon>
        <taxon>Ramazzottius</taxon>
    </lineage>
</organism>
<evidence type="ECO:0000250" key="1">
    <source>
        <dbReference type="UniProtKB" id="P0CU39"/>
    </source>
</evidence>
<evidence type="ECO:0000255" key="2"/>
<evidence type="ECO:0000255" key="3">
    <source>
        <dbReference type="PROSITE-ProRule" id="PRU00498"/>
    </source>
</evidence>
<evidence type="ECO:0000269" key="4">
    <source>
    </source>
</evidence>
<evidence type="ECO:0000303" key="5">
    <source>
    </source>
</evidence>
<evidence type="ECO:0000305" key="6"/>
<evidence type="ECO:0000305" key="7">
    <source>
    </source>
</evidence>
<evidence type="ECO:0007829" key="8">
    <source>
        <dbReference type="PDB" id="5XN9"/>
    </source>
</evidence>
<protein>
    <recommendedName>
        <fullName evidence="5">Secretory-abundant heat soluble protein 1</fullName>
        <shortName evidence="5">SAHS1</shortName>
    </recommendedName>
    <alternativeName>
        <fullName evidence="6">Tardigrade-specific intrinsically disordered protein SAHS1</fullName>
        <shortName evidence="6">TDP SAHS1</shortName>
    </alternativeName>
</protein>
<gene>
    <name evidence="5" type="primary">SAHS1</name>
    <name type="ORF">RvY_02423</name>
</gene>
<accession>J7MFT5</accession>
<sequence length="169" mass="19130">MSRAAVAIALLGCVVAAYGAPAEGHDDAKAEWTGKSWMGKWESTDRIENFDAFISALGLPLEQYGGNHKTFHKIWKEGDHYHHQISVPDKNYKNDVNFKLNEEGTTQHNNTEIKYKYTEDGGNLKAEVHVPSRNKVIHDEYKVNGDELEKTYKVGDVTAKRWYKKSSSS</sequence>
<name>SAHS1_RAMVA</name>
<reference key="1">
    <citation type="journal article" date="2012" name="PLoS ONE">
        <title>Two novel heat-soluble protein families abundantly expressed in an anhydrobiotic tardigrade.</title>
        <authorList>
            <person name="Yamaguchi A."/>
            <person name="Tanaka S."/>
            <person name="Yamaguchi S."/>
            <person name="Kuwahara H."/>
            <person name="Takamura C."/>
            <person name="Imajoh-Ohmi S."/>
            <person name="Horikawa D.D."/>
            <person name="Toyoda A."/>
            <person name="Katayama T."/>
            <person name="Arakawa K."/>
            <person name="Fujiyama A."/>
            <person name="Kubo T."/>
            <person name="Kunieda T."/>
        </authorList>
    </citation>
    <scope>NUCLEOTIDE SEQUENCE [MRNA]</scope>
    <scope>IDENTIFICATION BY MASS SPECTROMETRY</scope>
    <scope>FUNCTION</scope>
    <scope>SUBCELLULAR LOCATION</scope>
    <scope>DOMAIN</scope>
    <source>
        <strain>YOKOZUNA-1</strain>
    </source>
</reference>
<reference key="2">
    <citation type="journal article" date="2016" name="Nat. Commun.">
        <title>Extremotolerant tardigrade genome and improved radiotolerance of human cultured cells by tardigrade-unique protein.</title>
        <authorList>
            <person name="Hashimoto T."/>
            <person name="Horikawa D.D."/>
            <person name="Saito Y."/>
            <person name="Kuwahara H."/>
            <person name="Kozuka-Hata H."/>
            <person name="Shin-I T."/>
            <person name="Minakuchi Y."/>
            <person name="Ohishi K."/>
            <person name="Motoyama A."/>
            <person name="Aizu T."/>
            <person name="Enomoto A."/>
            <person name="Kondo K."/>
            <person name="Tanaka S."/>
            <person name="Hara Y."/>
            <person name="Koshikawa S."/>
            <person name="Sagara H."/>
            <person name="Miura T."/>
            <person name="Yokobori S."/>
            <person name="Miyagawa K."/>
            <person name="Suzuki Y."/>
            <person name="Kubo T."/>
            <person name="Oyama M."/>
            <person name="Kohara Y."/>
            <person name="Fujiyama A."/>
            <person name="Arakawa K."/>
            <person name="Katayama T."/>
            <person name="Toyoda A."/>
            <person name="Kunieda T."/>
        </authorList>
    </citation>
    <scope>NUCLEOTIDE SEQUENCE [LARGE SCALE GENOMIC DNA]</scope>
    <source>
        <strain>YOKOZUNA-1</strain>
    </source>
</reference>
<comment type="function">
    <text evidence="1 4">Secreted heat soluble protein acting as a molecular shield in water-deficient condition (PubMed:22937162). Tardigrade-specific intrinsically disordered proteins (TDPs) are essential for desiccation tolerance by forming non-crystalline amorphous solids upon desiccation, and this vitrified state mirrors their protective capabilities (By similarity).</text>
</comment>
<comment type="subcellular location">
    <subcellularLocation>
        <location evidence="4">Secreted</location>
    </subcellularLocation>
</comment>
<comment type="domain">
    <text evidence="7">SAHS-c1, SAHS-c2 and SAHS-c3 are 3 highly conserved regions within the SAHS protein family (PubMed:22937162).</text>
</comment>
<comment type="miscellaneous">
    <text evidence="1">Trehalose, a disaccharide essential for several organisms to survive drying, is detected at low levels or not at all in some tardigrade species, indicating that tardigrades possess potentially novel mechanisms for surviving desiccation involving tardigrade-specific intrinsically disordered proteins (TDPs) (By similarity).</text>
</comment>
<comment type="similarity">
    <text evidence="6">Belongs to the Secretory-abundant heat soluble protein (SAHS) family.</text>
</comment>
<proteinExistence type="evidence at protein level"/>
<dbReference type="EMBL" id="AB650497">
    <property type="protein sequence ID" value="BAM37956.1"/>
    <property type="molecule type" value="mRNA"/>
</dbReference>
<dbReference type="EMBL" id="BDGG01000001">
    <property type="protein sequence ID" value="GAU89931.1"/>
    <property type="molecule type" value="Genomic_DNA"/>
</dbReference>
<dbReference type="PDB" id="5XN9">
    <property type="method" value="X-ray"/>
    <property type="resolution" value="1.45 A"/>
    <property type="chains" value="A/B=31-167"/>
</dbReference>
<dbReference type="PDB" id="5XNA">
    <property type="method" value="X-ray"/>
    <property type="resolution" value="1.80 A"/>
    <property type="chains" value="A/B=31-167"/>
</dbReference>
<dbReference type="PDBsum" id="5XN9"/>
<dbReference type="PDBsum" id="5XNA"/>
<dbReference type="SMR" id="J7MFT5"/>
<dbReference type="STRING" id="947166.J7MFT5"/>
<dbReference type="GlyCosmos" id="J7MFT5">
    <property type="glycosylation" value="1 site, No reported glycans"/>
</dbReference>
<dbReference type="OrthoDB" id="354351at2759"/>
<dbReference type="Proteomes" id="UP000186922">
    <property type="component" value="Unassembled WGS sequence"/>
</dbReference>
<dbReference type="GO" id="GO:0005576">
    <property type="term" value="C:extracellular region"/>
    <property type="evidence" value="ECO:0007669"/>
    <property type="project" value="UniProtKB-SubCell"/>
</dbReference>
<dbReference type="GO" id="GO:0008289">
    <property type="term" value="F:lipid binding"/>
    <property type="evidence" value="ECO:0007669"/>
    <property type="project" value="InterPro"/>
</dbReference>
<dbReference type="CDD" id="cd00742">
    <property type="entry name" value="FABP"/>
    <property type="match status" value="1"/>
</dbReference>
<dbReference type="Gene3D" id="2.40.128.20">
    <property type="match status" value="1"/>
</dbReference>
<dbReference type="InterPro" id="IPR012674">
    <property type="entry name" value="Calycin"/>
</dbReference>
<dbReference type="InterPro" id="IPR000463">
    <property type="entry name" value="Fatty_acid-bd"/>
</dbReference>
<dbReference type="PRINTS" id="PR00178">
    <property type="entry name" value="FATTYACIDBP"/>
</dbReference>
<dbReference type="SUPFAM" id="SSF50814">
    <property type="entry name" value="Lipocalins"/>
    <property type="match status" value="1"/>
</dbReference>